<gene>
    <name evidence="3" type="primary">lepB</name>
    <name type="ORF">AFLA_066860</name>
</gene>
<protein>
    <recommendedName>
        <fullName evidence="3">Probable transcription factor lepB</fullName>
    </recommendedName>
    <alternativeName>
        <fullName evidence="3">Leporins biosynthesis protein B</fullName>
    </alternativeName>
</protein>
<evidence type="ECO:0000255" key="1"/>
<evidence type="ECO:0000269" key="2">
    <source>
    </source>
</evidence>
<evidence type="ECO:0000303" key="3">
    <source>
    </source>
</evidence>
<evidence type="ECO:0000305" key="4"/>
<evidence type="ECO:0000305" key="5">
    <source>
    </source>
</evidence>
<comment type="function">
    <text evidence="2 5">Probable transcription factor; part of the gene cluster 23 that mediates the biosynthesis of a family of 2-pyridones known as leporins (PubMed:20447271, PubMed:26051490).</text>
</comment>
<comment type="subcellular location">
    <subcellularLocation>
        <location evidence="4">Nucleus</location>
    </subcellularLocation>
</comment>
<comment type="disruption phenotype">
    <text evidence="2">Does not affect the expression of the leporins cluster (PubMed:26051490).</text>
</comment>
<accession>B8NJG5</accession>
<sequence>MSNGVSVRVLAVQQALETEFSLVEASGNPSSVGSCVARVWLPPKNEATWLLKRYAEDVTYLHHILHLPSVRQQMEDLYKQLSLGLRIEPCHVALILSIFASTAYTLTPLTGGDAVFTNEQTAVKCAFLWSKMALDVLEHSSRSTPGSIEDIQATIILSFVIFNFEGFTMRFRALSASALTMARDLSLHRLDARPDRLPGPHAPLDSDIGREIKRRVWWHMVSTDWILALSGGPQEGTYLMHPAHMRVNYPRNLDDRDLDRYNPQYSRPLSQPTAMTYTLLRIQLADICRSAIDALPPPFSDWGEVNYDRFISLDQRFEAFIRSLPVFFRLDEASRHQSRDVEHQYPQIIVQRYILWSTLQGRRSKLNQPFLTRVSMNPRYQYSRKVCLQSARCVIELKALMDHDMASLASAHVRLATFLHNYFLATAVLVMDLCLNKEGGSSEDRRQEIVDACRVLQEAEATSPMASRFLKSLMDILQKYQIQVLPATTVPDVRPLSANTGASGVPDPNLSDRDLVNPSQILPSTYDPLENANIDDLWQNFINLDQNCSPGSWDHLFSALDSRIV</sequence>
<name>LEPB_ASPFN</name>
<dbReference type="EMBL" id="EQ963479">
    <property type="protein sequence ID" value="EED49864.1"/>
    <property type="molecule type" value="Genomic_DNA"/>
</dbReference>
<dbReference type="RefSeq" id="XP_002380245.1">
    <property type="nucleotide sequence ID" value="XM_002380204.1"/>
</dbReference>
<dbReference type="STRING" id="332952.B8NJG5"/>
<dbReference type="EnsemblFungi" id="EED49864">
    <property type="protein sequence ID" value="EED49864"/>
    <property type="gene ID" value="AFLA_066860"/>
</dbReference>
<dbReference type="VEuPathDB" id="FungiDB:AFLA_008624"/>
<dbReference type="eggNOG" id="ENOG502SJ9D">
    <property type="taxonomic scope" value="Eukaryota"/>
</dbReference>
<dbReference type="HOGENOM" id="CLU_013260_4_0_1"/>
<dbReference type="OMA" id="VVCQHEG"/>
<dbReference type="GO" id="GO:0005634">
    <property type="term" value="C:nucleus"/>
    <property type="evidence" value="ECO:0007669"/>
    <property type="project" value="UniProtKB-SubCell"/>
</dbReference>
<dbReference type="GO" id="GO:0003677">
    <property type="term" value="F:DNA binding"/>
    <property type="evidence" value="ECO:0007669"/>
    <property type="project" value="InterPro"/>
</dbReference>
<dbReference type="GO" id="GO:0008270">
    <property type="term" value="F:zinc ion binding"/>
    <property type="evidence" value="ECO:0007669"/>
    <property type="project" value="InterPro"/>
</dbReference>
<dbReference type="GO" id="GO:0006351">
    <property type="term" value="P:DNA-templated transcription"/>
    <property type="evidence" value="ECO:0007669"/>
    <property type="project" value="InterPro"/>
</dbReference>
<dbReference type="CDD" id="cd12148">
    <property type="entry name" value="fungal_TF_MHR"/>
    <property type="match status" value="1"/>
</dbReference>
<dbReference type="InterPro" id="IPR050613">
    <property type="entry name" value="Sec_Metabolite_Reg"/>
</dbReference>
<dbReference type="InterPro" id="IPR007219">
    <property type="entry name" value="Transcription_factor_dom_fun"/>
</dbReference>
<dbReference type="PANTHER" id="PTHR31001:SF90">
    <property type="entry name" value="CENTROMERE DNA-BINDING PROTEIN COMPLEX CBF3 SUBUNIT B"/>
    <property type="match status" value="1"/>
</dbReference>
<dbReference type="PANTHER" id="PTHR31001">
    <property type="entry name" value="UNCHARACTERIZED TRANSCRIPTIONAL REGULATORY PROTEIN"/>
    <property type="match status" value="1"/>
</dbReference>
<dbReference type="Pfam" id="PF04082">
    <property type="entry name" value="Fungal_trans"/>
    <property type="match status" value="1"/>
</dbReference>
<organism>
    <name type="scientific">Aspergillus flavus (strain ATCC 200026 / FGSC A1120 / IAM 13836 / NRRL 3357 / JCM 12722 / SRRC 167)</name>
    <dbReference type="NCBI Taxonomy" id="332952"/>
    <lineage>
        <taxon>Eukaryota</taxon>
        <taxon>Fungi</taxon>
        <taxon>Dikarya</taxon>
        <taxon>Ascomycota</taxon>
        <taxon>Pezizomycotina</taxon>
        <taxon>Eurotiomycetes</taxon>
        <taxon>Eurotiomycetidae</taxon>
        <taxon>Eurotiales</taxon>
        <taxon>Aspergillaceae</taxon>
        <taxon>Aspergillus</taxon>
        <taxon>Aspergillus subgen. Circumdati</taxon>
    </lineage>
</organism>
<keyword id="KW-0539">Nucleus</keyword>
<keyword id="KW-0804">Transcription</keyword>
<keyword id="KW-0805">Transcription regulation</keyword>
<reference key="1">
    <citation type="journal article" date="2015" name="Genome Announc.">
        <title>Genome sequence of Aspergillus flavus NRRL 3357, a strain that causes aflatoxin contamination of food and feed.</title>
        <authorList>
            <person name="Nierman W.C."/>
            <person name="Yu J."/>
            <person name="Fedorova-Abrams N.D."/>
            <person name="Losada L."/>
            <person name="Cleveland T.E."/>
            <person name="Bhatnagar D."/>
            <person name="Bennett J.W."/>
            <person name="Dean R."/>
            <person name="Payne G.A."/>
        </authorList>
    </citation>
    <scope>NUCLEOTIDE SEQUENCE [LARGE SCALE GENOMIC DNA]</scope>
    <source>
        <strain>ATCC 200026 / FGSC A1120 / IAM 13836 / NRRL 3357 / JCM 12722 / SRRC 167</strain>
    </source>
</reference>
<reference key="2">
    <citation type="journal article" date="2010" name="Mol. Plant Pathol.">
        <title>Beyond aflatoxin: four distinct expression patterns and functional roles associated with Aspergillus flavus secondary metabolism gene clusters.</title>
        <authorList>
            <person name="Georgianna D.R."/>
            <person name="Fedorova N.D."/>
            <person name="Burroughs J.L."/>
            <person name="Dolezal A.L."/>
            <person name="Bok J.W."/>
            <person name="Horowitz-Brown S."/>
            <person name="Woloshuk C.P."/>
            <person name="Yu J."/>
            <person name="Keller N.P."/>
            <person name="Payne G.A."/>
        </authorList>
    </citation>
    <scope>IDENTIFICATION OF THE GENE CLUSTER 23</scope>
    <scope>FUNCTION</scope>
</reference>
<reference key="3">
    <citation type="journal article" date="2015" name="Fungal Genet. Biol.">
        <title>An Aspergillus flavus secondary metabolic gene cluster containing a hybrid PKS-NRPS is necessary for synthesis of the 2-pyridones, leporins.</title>
        <authorList>
            <person name="Cary J.W."/>
            <person name="Uka V."/>
            <person name="Han Z."/>
            <person name="Buyst D."/>
            <person name="Harris-Coward P.Y."/>
            <person name="Ehrlich K.C."/>
            <person name="Wei Q."/>
            <person name="Bhatnagar D."/>
            <person name="Dowd P.F."/>
            <person name="Martens S.L."/>
            <person name="Calvo A.M."/>
            <person name="Martins J.C."/>
            <person name="Vanhaecke L."/>
            <person name="Coenye T."/>
            <person name="De Saeger S."/>
            <person name="Di Mavungu J.D."/>
        </authorList>
    </citation>
    <scope>FUNCTION</scope>
    <scope>DISRUPTION PHENOTYPE</scope>
</reference>
<feature type="chain" id="PRO_0000438459" description="Probable transcription factor lepB">
    <location>
        <begin position="1"/>
        <end position="565"/>
    </location>
</feature>
<feature type="region of interest" description="Fungal specific transcription factor domain" evidence="1">
    <location>
        <begin position="52"/>
        <end position="259"/>
    </location>
</feature>
<proteinExistence type="predicted"/>